<sequence length="72" mass="8889">VKRPMNAFMVWSQNERRKIMDQWPDMHNAEISERLGRRWQLLQDSEKIPFVKEAGRLRLKHMADYPDYKYRP</sequence>
<protein>
    <recommendedName>
        <fullName>SRY-related protein MG43</fullName>
    </recommendedName>
</protein>
<keyword id="KW-0238">DNA-binding</keyword>
<keyword id="KW-0539">Nucleus</keyword>
<name>MG43_TARMA</name>
<organism>
    <name type="scientific">Tarentola mauritanica</name>
    <name type="common">Common wall gecko</name>
    <name type="synonym">Lacerta mauritanica</name>
    <dbReference type="NCBI Taxonomy" id="8569"/>
    <lineage>
        <taxon>Eukaryota</taxon>
        <taxon>Metazoa</taxon>
        <taxon>Chordata</taxon>
        <taxon>Craniata</taxon>
        <taxon>Vertebrata</taxon>
        <taxon>Euteleostomi</taxon>
        <taxon>Lepidosauria</taxon>
        <taxon>Squamata</taxon>
        <taxon>Bifurcata</taxon>
        <taxon>Gekkota</taxon>
        <taxon>Phyllodactylidae</taxon>
        <taxon>Tarentola</taxon>
    </lineage>
</organism>
<accession>P40652</accession>
<comment type="subcellular location">
    <subcellularLocation>
        <location evidence="1">Nucleus</location>
    </subcellularLocation>
</comment>
<dbReference type="EMBL" id="M86338">
    <property type="protein sequence ID" value="AAA49622.1"/>
    <property type="molecule type" value="Genomic_DNA"/>
</dbReference>
<dbReference type="PIR" id="I51370">
    <property type="entry name" value="I51370"/>
</dbReference>
<dbReference type="SMR" id="P40652"/>
<dbReference type="GO" id="GO:0005634">
    <property type="term" value="C:nucleus"/>
    <property type="evidence" value="ECO:0007669"/>
    <property type="project" value="UniProtKB-SubCell"/>
</dbReference>
<dbReference type="GO" id="GO:0001228">
    <property type="term" value="F:DNA-binding transcription activator activity, RNA polymerase II-specific"/>
    <property type="evidence" value="ECO:0007669"/>
    <property type="project" value="TreeGrafter"/>
</dbReference>
<dbReference type="GO" id="GO:0000978">
    <property type="term" value="F:RNA polymerase II cis-regulatory region sequence-specific DNA binding"/>
    <property type="evidence" value="ECO:0007669"/>
    <property type="project" value="TreeGrafter"/>
</dbReference>
<dbReference type="GO" id="GO:0007420">
    <property type="term" value="P:brain development"/>
    <property type="evidence" value="ECO:0007669"/>
    <property type="project" value="TreeGrafter"/>
</dbReference>
<dbReference type="GO" id="GO:0048593">
    <property type="term" value="P:camera-type eye morphogenesis"/>
    <property type="evidence" value="ECO:0007669"/>
    <property type="project" value="TreeGrafter"/>
</dbReference>
<dbReference type="GO" id="GO:0000122">
    <property type="term" value="P:negative regulation of transcription by RNA polymerase II"/>
    <property type="evidence" value="ECO:0007669"/>
    <property type="project" value="TreeGrafter"/>
</dbReference>
<dbReference type="GO" id="GO:0030182">
    <property type="term" value="P:neuron differentiation"/>
    <property type="evidence" value="ECO:0007669"/>
    <property type="project" value="TreeGrafter"/>
</dbReference>
<dbReference type="FunFam" id="1.10.30.10:FF:000007">
    <property type="entry name" value="Transcription factor SOX"/>
    <property type="match status" value="1"/>
</dbReference>
<dbReference type="Gene3D" id="1.10.30.10">
    <property type="entry name" value="High mobility group box domain"/>
    <property type="match status" value="1"/>
</dbReference>
<dbReference type="InterPro" id="IPR009071">
    <property type="entry name" value="HMG_box_dom"/>
</dbReference>
<dbReference type="InterPro" id="IPR036910">
    <property type="entry name" value="HMG_box_dom_sf"/>
</dbReference>
<dbReference type="InterPro" id="IPR050140">
    <property type="entry name" value="SRY-related_HMG-box_TF-like"/>
</dbReference>
<dbReference type="PANTHER" id="PTHR10270">
    <property type="entry name" value="SOX TRANSCRIPTION FACTOR"/>
    <property type="match status" value="1"/>
</dbReference>
<dbReference type="PANTHER" id="PTHR10270:SF221">
    <property type="entry name" value="TRANSCRIPTION FACTOR SOX-12"/>
    <property type="match status" value="1"/>
</dbReference>
<dbReference type="Pfam" id="PF00505">
    <property type="entry name" value="HMG_box"/>
    <property type="match status" value="1"/>
</dbReference>
<dbReference type="SMART" id="SM00398">
    <property type="entry name" value="HMG"/>
    <property type="match status" value="1"/>
</dbReference>
<dbReference type="SUPFAM" id="SSF47095">
    <property type="entry name" value="HMG-box"/>
    <property type="match status" value="1"/>
</dbReference>
<dbReference type="PROSITE" id="PS50118">
    <property type="entry name" value="HMG_BOX_2"/>
    <property type="match status" value="1"/>
</dbReference>
<reference key="1">
    <citation type="journal article" date="1993" name="PCR Methods Appl.">
        <title>PCR amplification of SRY-related gene sequences reveals evolutionary conservation of the SRY-box motif.</title>
        <authorList>
            <person name="Coriat A.M."/>
            <person name="Mueller U."/>
            <person name="Harry J.L."/>
            <person name="Uwanogho D."/>
            <person name="Sharpe P.T."/>
        </authorList>
    </citation>
    <scope>NUCLEOTIDE SEQUENCE [GENOMIC DNA]</scope>
</reference>
<proteinExistence type="inferred from homology"/>
<feature type="chain" id="PRO_0000048800" description="SRY-related protein MG43">
    <location>
        <begin position="1" status="less than"/>
        <end position="72" status="greater than"/>
    </location>
</feature>
<feature type="DNA-binding region" description="HMG box" evidence="1">
    <location>
        <begin position="1"/>
        <end position="69"/>
    </location>
</feature>
<feature type="non-terminal residue">
    <location>
        <position position="1"/>
    </location>
</feature>
<feature type="non-terminal residue">
    <location>
        <position position="72"/>
    </location>
</feature>
<evidence type="ECO:0000255" key="1">
    <source>
        <dbReference type="PROSITE-ProRule" id="PRU00267"/>
    </source>
</evidence>